<evidence type="ECO:0000255" key="1"/>
<evidence type="ECO:0000256" key="2">
    <source>
        <dbReference type="SAM" id="MobiDB-lite"/>
    </source>
</evidence>
<evidence type="ECO:0000269" key="3">
    <source>
    </source>
</evidence>
<evidence type="ECO:0000305" key="4"/>
<dbReference type="EMBL" id="AJ291677">
    <property type="protein sequence ID" value="CAC82744.1"/>
    <property type="molecule type" value="mRNA"/>
</dbReference>
<dbReference type="EMBL" id="BC131696">
    <property type="protein sequence ID" value="AAI31697.1"/>
    <property type="molecule type" value="mRNA"/>
</dbReference>
<dbReference type="CCDS" id="CCDS5980.1"/>
<dbReference type="RefSeq" id="NP_473369.1">
    <property type="nucleotide sequence ID" value="NM_054028.2"/>
</dbReference>
<dbReference type="SMR" id="Q96KT7"/>
<dbReference type="BioGRID" id="123711">
    <property type="interactions" value="1"/>
</dbReference>
<dbReference type="IntAct" id="Q96KT7">
    <property type="interactions" value="1"/>
</dbReference>
<dbReference type="STRING" id="9606.ENSP00000371872"/>
<dbReference type="TCDB" id="2.A.7.28.5">
    <property type="family name" value="the drug/metabolite transporter (dmt) superfamily"/>
</dbReference>
<dbReference type="iPTMnet" id="Q96KT7"/>
<dbReference type="PhosphoSitePlus" id="Q96KT7"/>
<dbReference type="BioMuta" id="SLC35G5"/>
<dbReference type="DMDM" id="74751987"/>
<dbReference type="MassIVE" id="Q96KT7"/>
<dbReference type="PaxDb" id="9606-ENSP00000371872"/>
<dbReference type="Antibodypedia" id="54539">
    <property type="antibodies" value="57 antibodies from 11 providers"/>
</dbReference>
<dbReference type="DNASU" id="83650"/>
<dbReference type="Ensembl" id="ENST00000382435.5">
    <property type="protein sequence ID" value="ENSP00000371872.5"/>
    <property type="gene ID" value="ENSG00000177710.6"/>
</dbReference>
<dbReference type="Ensembl" id="ENST00000646844.3">
    <property type="protein sequence ID" value="ENSP00000495515.1"/>
    <property type="gene ID" value="ENSG00000285084.3"/>
</dbReference>
<dbReference type="GeneID" id="83650"/>
<dbReference type="KEGG" id="hsa:83650"/>
<dbReference type="MANE-Select" id="ENST00000382435.5">
    <property type="protein sequence ID" value="ENSP00000371872.5"/>
    <property type="RefSeq nucleotide sequence ID" value="NM_054028.2"/>
    <property type="RefSeq protein sequence ID" value="NP_473369.1"/>
</dbReference>
<dbReference type="UCSC" id="uc003wtp.2">
    <property type="organism name" value="human"/>
</dbReference>
<dbReference type="AGR" id="HGNC:15546"/>
<dbReference type="CTD" id="83650"/>
<dbReference type="DisGeNET" id="83650"/>
<dbReference type="GeneCards" id="SLC35G5"/>
<dbReference type="HGNC" id="HGNC:15546">
    <property type="gene designation" value="SLC35G5"/>
</dbReference>
<dbReference type="HPA" id="ENSG00000177710">
    <property type="expression patterns" value="Tissue enhanced (testis)"/>
</dbReference>
<dbReference type="MIM" id="615199">
    <property type="type" value="gene"/>
</dbReference>
<dbReference type="neXtProt" id="NX_Q96KT7"/>
<dbReference type="OpenTargets" id="ENSG00000177710"/>
<dbReference type="PharmGKB" id="PA24756"/>
<dbReference type="VEuPathDB" id="HostDB:ENSG00000177710"/>
<dbReference type="eggNOG" id="ENOG502RCFC">
    <property type="taxonomic scope" value="Eukaryota"/>
</dbReference>
<dbReference type="GeneTree" id="ENSGT00940000153249"/>
<dbReference type="HOGENOM" id="CLU_055637_0_0_1"/>
<dbReference type="InParanoid" id="Q96KT7"/>
<dbReference type="OMA" id="ELLICXL"/>
<dbReference type="OrthoDB" id="306876at2759"/>
<dbReference type="PAN-GO" id="Q96KT7">
    <property type="GO annotations" value="1 GO annotation based on evolutionary models"/>
</dbReference>
<dbReference type="PhylomeDB" id="Q96KT7"/>
<dbReference type="TreeFam" id="TF331838"/>
<dbReference type="PathwayCommons" id="Q96KT7"/>
<dbReference type="SignaLink" id="Q96KT7"/>
<dbReference type="BioGRID-ORCS" id="83650">
    <property type="hits" value="11 hits in 1065 CRISPR screens"/>
</dbReference>
<dbReference type="GenomeRNAi" id="83650"/>
<dbReference type="Pharos" id="Q96KT7">
    <property type="development level" value="Tbio"/>
</dbReference>
<dbReference type="PRO" id="PR:Q96KT7"/>
<dbReference type="Proteomes" id="UP000005640">
    <property type="component" value="Chromosome 8"/>
</dbReference>
<dbReference type="RNAct" id="Q96KT7">
    <property type="molecule type" value="protein"/>
</dbReference>
<dbReference type="Bgee" id="ENSG00000177710">
    <property type="expression patterns" value="Expressed in granulocyte and 56 other cell types or tissues"/>
</dbReference>
<dbReference type="GO" id="GO:0016020">
    <property type="term" value="C:membrane"/>
    <property type="evidence" value="ECO:0000318"/>
    <property type="project" value="GO_Central"/>
</dbReference>
<dbReference type="InterPro" id="IPR000620">
    <property type="entry name" value="EamA_dom"/>
</dbReference>
<dbReference type="PANTHER" id="PTHR22911">
    <property type="entry name" value="ACYL-MALONYL CONDENSING ENZYME-RELATED"/>
    <property type="match status" value="1"/>
</dbReference>
<dbReference type="PANTHER" id="PTHR22911:SF32">
    <property type="entry name" value="SOLUTE CARRIER FAMILY 35 MEMBER G5-RELATED"/>
    <property type="match status" value="1"/>
</dbReference>
<dbReference type="Pfam" id="PF00892">
    <property type="entry name" value="EamA"/>
    <property type="match status" value="2"/>
</dbReference>
<dbReference type="SUPFAM" id="SSF103481">
    <property type="entry name" value="Multidrug resistance efflux transporter EmrE"/>
    <property type="match status" value="2"/>
</dbReference>
<feature type="chain" id="PRO_0000269556" description="Solute carrier family 35 member G5">
    <location>
        <begin position="1"/>
        <end position="338"/>
    </location>
</feature>
<feature type="transmembrane region" description="Helical" evidence="1">
    <location>
        <begin position="37"/>
        <end position="57"/>
    </location>
</feature>
<feature type="transmembrane region" description="Helical" evidence="1">
    <location>
        <begin position="67"/>
        <end position="87"/>
    </location>
</feature>
<feature type="transmembrane region" description="Helical" evidence="1">
    <location>
        <begin position="102"/>
        <end position="122"/>
    </location>
</feature>
<feature type="transmembrane region" description="Helical" evidence="1">
    <location>
        <begin position="160"/>
        <end position="180"/>
    </location>
</feature>
<feature type="transmembrane region" description="Helical" evidence="1">
    <location>
        <begin position="190"/>
        <end position="210"/>
    </location>
</feature>
<feature type="transmembrane region" description="Helical" evidence="1">
    <location>
        <begin position="221"/>
        <end position="241"/>
    </location>
</feature>
<feature type="transmembrane region" description="Helical" evidence="1">
    <location>
        <begin position="250"/>
        <end position="270"/>
    </location>
</feature>
<feature type="transmembrane region" description="Helical" evidence="1">
    <location>
        <begin position="281"/>
        <end position="301"/>
    </location>
</feature>
<feature type="transmembrane region" description="Helical" evidence="1">
    <location>
        <begin position="305"/>
        <end position="325"/>
    </location>
</feature>
<feature type="domain" description="EamA 1">
    <location>
        <begin position="49"/>
        <end position="174"/>
    </location>
</feature>
<feature type="domain" description="EamA 2">
    <location>
        <begin position="272"/>
        <end position="325"/>
    </location>
</feature>
<feature type="region of interest" description="Disordered" evidence="2">
    <location>
        <begin position="1"/>
        <end position="27"/>
    </location>
</feature>
<feature type="sequence variant" id="VAR_059579" description="In dbSNP:rs6990563.">
    <original>G</original>
    <variation>D</variation>
    <location>
        <position position="46"/>
    </location>
</feature>
<feature type="sequence variant" id="VAR_059580" description="In dbSNP:rs12681991.">
    <original>L</original>
    <variation>P</variation>
    <location>
        <position position="307"/>
    </location>
</feature>
<keyword id="KW-0472">Membrane</keyword>
<keyword id="KW-1185">Reference proteome</keyword>
<keyword id="KW-0677">Repeat</keyword>
<keyword id="KW-0812">Transmembrane</keyword>
<keyword id="KW-1133">Transmembrane helix</keyword>
<sequence>MAGSHPYFNLPDSTHPSPPSAPPSLRWHQRCQPSGATNGLLVALLGGGLPAGFVGPLSRMAYQGSNLPSLELLICRCLFHLPIALLLKLRGDPLLGPPDIRGWACFCALLNVLSIGCAYSAVQVVPAGNAATVRKGSSTVCSAVLTLCLESQGLGGYEWCGLLGSILGLIIILGPGLWTLQEGTTGVYTTLGYVQAFLGGLALSLGLLVYRSLHFPSCLPTVAFLSGLVGLLGCVPGLFVLQTPVLPSDLLSWSCVGAEGILALVSFTCVGYAVTKAHPALVCAVLHSEVVVALILQYYMLHETVALSDIMGAGVVLGSIAIITARNLSCERTGKVEE</sequence>
<organism>
    <name type="scientific">Homo sapiens</name>
    <name type="common">Human</name>
    <dbReference type="NCBI Taxonomy" id="9606"/>
    <lineage>
        <taxon>Eukaryota</taxon>
        <taxon>Metazoa</taxon>
        <taxon>Chordata</taxon>
        <taxon>Craniata</taxon>
        <taxon>Vertebrata</taxon>
        <taxon>Euteleostomi</taxon>
        <taxon>Mammalia</taxon>
        <taxon>Eutheria</taxon>
        <taxon>Euarchontoglires</taxon>
        <taxon>Primates</taxon>
        <taxon>Haplorrhini</taxon>
        <taxon>Catarrhini</taxon>
        <taxon>Hominidae</taxon>
        <taxon>Homo</taxon>
    </lineage>
</organism>
<gene>
    <name type="primary">SLC35G5</name>
    <name type="synonym">AMAC</name>
    <name type="synonym">AMAC1L2</name>
</gene>
<accession>Q96KT7</accession>
<accession>A2RRL6</accession>
<name>S35G5_HUMAN</name>
<comment type="interaction">
    <interactant intactId="EBI-13598465">
        <id>Q96KT7</id>
    </interactant>
    <interactant intactId="EBI-747430">
        <id>Q9BXK5</id>
        <label>BCL2L13</label>
    </interactant>
    <organismsDiffer>false</organismsDiffer>
    <experiments>3</experiments>
</comment>
<comment type="subcellular location">
    <subcellularLocation>
        <location evidence="4">Membrane</location>
        <topology evidence="4">Multi-pass membrane protein</topology>
    </subcellularLocation>
</comment>
<comment type="tissue specificity">
    <text evidence="3">Expressed in placenta and testis.</text>
</comment>
<comment type="miscellaneous">
    <text>The gene encoding this protein appears to have arisen by SVA-mediated retrotransposition of the SLC35G6 gene in the primate lineage.</text>
</comment>
<comment type="similarity">
    <text evidence="4">Belongs to the SLC35G solute transporter family.</text>
</comment>
<reference key="1">
    <citation type="journal article" date="2002" name="Eur. J. Hum. Genet.">
        <title>Physical and transcriptional map of the critical region for keratolytic winter erythema (KWE) on chromosome 8p22-p23 between D8S550 and D8S1759.</title>
        <authorList>
            <person name="Appel S."/>
            <person name="Filter M."/>
            <person name="Reis A."/>
            <person name="Hennies H.C."/>
            <person name="Bergheim A."/>
            <person name="Ogilvie E."/>
            <person name="Arndt S."/>
            <person name="Simmons A."/>
            <person name="Lovett M."/>
            <person name="Hide W."/>
            <person name="Ramsay M."/>
            <person name="Reichwald K."/>
            <person name="Zimmermann W."/>
            <person name="Rosenthal A."/>
        </authorList>
    </citation>
    <scope>NUCLEOTIDE SEQUENCE [MRNA]</scope>
</reference>
<reference key="2">
    <citation type="journal article" date="2004" name="Genome Res.">
        <title>The status, quality, and expansion of the NIH full-length cDNA project: the Mammalian Gene Collection (MGC).</title>
        <authorList>
            <consortium name="The MGC Project Team"/>
        </authorList>
    </citation>
    <scope>NUCLEOTIDE SEQUENCE [LARGE SCALE MRNA]</scope>
</reference>
<reference key="3">
    <citation type="journal article" date="2006" name="Proc. Natl. Acad. Sci. U.S.A.">
        <title>Emergence of primate genes by retrotransposon-mediated sequence transduction.</title>
        <authorList>
            <person name="Xing J."/>
            <person name="Wang H."/>
            <person name="Belancio V.P."/>
            <person name="Cordaux R."/>
            <person name="Deininger P.L."/>
            <person name="Batzer M.A."/>
        </authorList>
    </citation>
    <scope>TISSUE SPECIFICITY</scope>
    <scope>GENE EVOLUTION</scope>
</reference>
<proteinExistence type="evidence at protein level"/>
<protein>
    <recommendedName>
        <fullName>Solute carrier family 35 member G5</fullName>
    </recommendedName>
    <alternativeName>
        <fullName>Acyl-malonyl-condensing enzyme 1-like protein 2</fullName>
    </alternativeName>
</protein>